<evidence type="ECO:0000255" key="1">
    <source>
        <dbReference type="HAMAP-Rule" id="MF_00300"/>
    </source>
</evidence>
<organism>
    <name type="scientific">Buchnera aphidicola subsp. Cinara cedri (strain Cc)</name>
    <dbReference type="NCBI Taxonomy" id="372461"/>
    <lineage>
        <taxon>Bacteria</taxon>
        <taxon>Pseudomonadati</taxon>
        <taxon>Pseudomonadota</taxon>
        <taxon>Gammaproteobacteria</taxon>
        <taxon>Enterobacterales</taxon>
        <taxon>Erwiniaceae</taxon>
        <taxon>Buchnera</taxon>
    </lineage>
</organism>
<name>AROC_BUCCC</name>
<accession>Q058B0</accession>
<keyword id="KW-0028">Amino-acid biosynthesis</keyword>
<keyword id="KW-0057">Aromatic amino acid biosynthesis</keyword>
<keyword id="KW-0274">FAD</keyword>
<keyword id="KW-0285">Flavoprotein</keyword>
<keyword id="KW-0288">FMN</keyword>
<keyword id="KW-0456">Lyase</keyword>
<keyword id="KW-0521">NADP</keyword>
<keyword id="KW-1185">Reference proteome</keyword>
<sequence length="353" mass="38877">MPGNSIGKIFKVTTCGESHGPMLAGIIDGVPPGLSLNNKDIQYELNRRRPGFSKFTSQRREKDKVEIFSGIFKGITTGTSIGIRIKNIDIRSQDYSEIKNLYRPNHADYTYEKKYGIRDYRGGGRSSARETAIRVAAGAIAKKYLKLQHNIKIRGYLSQIGSIYCPFQSWEEVEKNPFFCSNSEKIKKIIHFIKKLKKSGNSVGAKITIIAKNVPIGLGEPVFDRLNAEIAHSIMSINAAKSIEIGDGIHVAKQTGVEHRDEILPNGFSSNHSGGILGGISNGEEIIVHAAFKPTSSIKIPGKTIDTFGKKRFIITKGRHDPCVGIRAVPIAEAMLAITLMDHVLRFKAQCGK</sequence>
<dbReference type="EC" id="4.2.3.5" evidence="1"/>
<dbReference type="EMBL" id="CP000263">
    <property type="protein sequence ID" value="ABJ90539.1"/>
    <property type="molecule type" value="Genomic_DNA"/>
</dbReference>
<dbReference type="RefSeq" id="WP_011672458.1">
    <property type="nucleotide sequence ID" value="NC_008513.1"/>
</dbReference>
<dbReference type="SMR" id="Q058B0"/>
<dbReference type="STRING" id="372461.BCc_061"/>
<dbReference type="KEGG" id="bcc:BCc_061"/>
<dbReference type="eggNOG" id="COG0082">
    <property type="taxonomic scope" value="Bacteria"/>
</dbReference>
<dbReference type="HOGENOM" id="CLU_034547_0_2_6"/>
<dbReference type="OrthoDB" id="9771806at2"/>
<dbReference type="UniPathway" id="UPA00053">
    <property type="reaction ID" value="UER00090"/>
</dbReference>
<dbReference type="Proteomes" id="UP000000669">
    <property type="component" value="Chromosome"/>
</dbReference>
<dbReference type="GO" id="GO:0005829">
    <property type="term" value="C:cytosol"/>
    <property type="evidence" value="ECO:0007669"/>
    <property type="project" value="TreeGrafter"/>
</dbReference>
<dbReference type="GO" id="GO:0004107">
    <property type="term" value="F:chorismate synthase activity"/>
    <property type="evidence" value="ECO:0007669"/>
    <property type="project" value="UniProtKB-UniRule"/>
</dbReference>
<dbReference type="GO" id="GO:0010181">
    <property type="term" value="F:FMN binding"/>
    <property type="evidence" value="ECO:0007669"/>
    <property type="project" value="TreeGrafter"/>
</dbReference>
<dbReference type="GO" id="GO:0008652">
    <property type="term" value="P:amino acid biosynthetic process"/>
    <property type="evidence" value="ECO:0007669"/>
    <property type="project" value="UniProtKB-KW"/>
</dbReference>
<dbReference type="GO" id="GO:0009073">
    <property type="term" value="P:aromatic amino acid family biosynthetic process"/>
    <property type="evidence" value="ECO:0007669"/>
    <property type="project" value="UniProtKB-KW"/>
</dbReference>
<dbReference type="GO" id="GO:0009423">
    <property type="term" value="P:chorismate biosynthetic process"/>
    <property type="evidence" value="ECO:0007669"/>
    <property type="project" value="UniProtKB-UniRule"/>
</dbReference>
<dbReference type="CDD" id="cd07304">
    <property type="entry name" value="Chorismate_synthase"/>
    <property type="match status" value="1"/>
</dbReference>
<dbReference type="Gene3D" id="3.60.150.10">
    <property type="entry name" value="Chorismate synthase AroC"/>
    <property type="match status" value="1"/>
</dbReference>
<dbReference type="HAMAP" id="MF_00300">
    <property type="entry name" value="Chorismate_synth"/>
    <property type="match status" value="1"/>
</dbReference>
<dbReference type="InterPro" id="IPR000453">
    <property type="entry name" value="Chorismate_synth"/>
</dbReference>
<dbReference type="InterPro" id="IPR035904">
    <property type="entry name" value="Chorismate_synth_AroC_sf"/>
</dbReference>
<dbReference type="InterPro" id="IPR020541">
    <property type="entry name" value="Chorismate_synthase_CS"/>
</dbReference>
<dbReference type="NCBIfam" id="TIGR00033">
    <property type="entry name" value="aroC"/>
    <property type="match status" value="1"/>
</dbReference>
<dbReference type="NCBIfam" id="NF003793">
    <property type="entry name" value="PRK05382.1"/>
    <property type="match status" value="1"/>
</dbReference>
<dbReference type="PANTHER" id="PTHR21085">
    <property type="entry name" value="CHORISMATE SYNTHASE"/>
    <property type="match status" value="1"/>
</dbReference>
<dbReference type="PANTHER" id="PTHR21085:SF0">
    <property type="entry name" value="CHORISMATE SYNTHASE"/>
    <property type="match status" value="1"/>
</dbReference>
<dbReference type="Pfam" id="PF01264">
    <property type="entry name" value="Chorismate_synt"/>
    <property type="match status" value="1"/>
</dbReference>
<dbReference type="PIRSF" id="PIRSF001456">
    <property type="entry name" value="Chorismate_synth"/>
    <property type="match status" value="1"/>
</dbReference>
<dbReference type="SUPFAM" id="SSF103263">
    <property type="entry name" value="Chorismate synthase, AroC"/>
    <property type="match status" value="1"/>
</dbReference>
<dbReference type="PROSITE" id="PS00787">
    <property type="entry name" value="CHORISMATE_SYNTHASE_1"/>
    <property type="match status" value="1"/>
</dbReference>
<dbReference type="PROSITE" id="PS00788">
    <property type="entry name" value="CHORISMATE_SYNTHASE_2"/>
    <property type="match status" value="1"/>
</dbReference>
<dbReference type="PROSITE" id="PS00789">
    <property type="entry name" value="CHORISMATE_SYNTHASE_3"/>
    <property type="match status" value="1"/>
</dbReference>
<protein>
    <recommendedName>
        <fullName evidence="1">Chorismate synthase</fullName>
        <shortName evidence="1">CS</shortName>
        <ecNumber evidence="1">4.2.3.5</ecNumber>
    </recommendedName>
    <alternativeName>
        <fullName evidence="1">5-enolpyruvylshikimate-3-phosphate phospholyase</fullName>
    </alternativeName>
</protein>
<comment type="function">
    <text evidence="1">Catalyzes the anti-1,4-elimination of the C-3 phosphate and the C-6 proR hydrogen from 5-enolpyruvylshikimate-3-phosphate (EPSP) to yield chorismate, which is the branch point compound that serves as the starting substrate for the three terminal pathways of aromatic amino acid biosynthesis. This reaction introduces a second double bond into the aromatic ring system.</text>
</comment>
<comment type="catalytic activity">
    <reaction evidence="1">
        <text>5-O-(1-carboxyvinyl)-3-phosphoshikimate = chorismate + phosphate</text>
        <dbReference type="Rhea" id="RHEA:21020"/>
        <dbReference type="ChEBI" id="CHEBI:29748"/>
        <dbReference type="ChEBI" id="CHEBI:43474"/>
        <dbReference type="ChEBI" id="CHEBI:57701"/>
        <dbReference type="EC" id="4.2.3.5"/>
    </reaction>
</comment>
<comment type="cofactor">
    <cofactor evidence="1">
        <name>FMNH2</name>
        <dbReference type="ChEBI" id="CHEBI:57618"/>
    </cofactor>
    <text evidence="1">Reduced FMN (FMNH(2)).</text>
</comment>
<comment type="pathway">
    <text evidence="1">Metabolic intermediate biosynthesis; chorismate biosynthesis; chorismate from D-erythrose 4-phosphate and phosphoenolpyruvate: step 7/7.</text>
</comment>
<comment type="subunit">
    <text evidence="1">Homotetramer.</text>
</comment>
<comment type="similarity">
    <text evidence="1">Belongs to the chorismate synthase family.</text>
</comment>
<feature type="chain" id="PRO_1000022465" description="Chorismate synthase">
    <location>
        <begin position="1"/>
        <end position="353"/>
    </location>
</feature>
<feature type="binding site" evidence="1">
    <location>
        <position position="48"/>
    </location>
    <ligand>
        <name>NADP(+)</name>
        <dbReference type="ChEBI" id="CHEBI:58349"/>
    </ligand>
</feature>
<feature type="binding site" evidence="1">
    <location>
        <begin position="125"/>
        <end position="127"/>
    </location>
    <ligand>
        <name>FMN</name>
        <dbReference type="ChEBI" id="CHEBI:58210"/>
    </ligand>
</feature>
<feature type="binding site" evidence="1">
    <location>
        <begin position="238"/>
        <end position="239"/>
    </location>
    <ligand>
        <name>FMN</name>
        <dbReference type="ChEBI" id="CHEBI:58210"/>
    </ligand>
</feature>
<feature type="binding site" evidence="1">
    <location>
        <position position="278"/>
    </location>
    <ligand>
        <name>FMN</name>
        <dbReference type="ChEBI" id="CHEBI:58210"/>
    </ligand>
</feature>
<feature type="binding site" evidence="1">
    <location>
        <begin position="293"/>
        <end position="297"/>
    </location>
    <ligand>
        <name>FMN</name>
        <dbReference type="ChEBI" id="CHEBI:58210"/>
    </ligand>
</feature>
<feature type="binding site" evidence="1">
    <location>
        <position position="319"/>
    </location>
    <ligand>
        <name>FMN</name>
        <dbReference type="ChEBI" id="CHEBI:58210"/>
    </ligand>
</feature>
<proteinExistence type="inferred from homology"/>
<gene>
    <name evidence="1" type="primary">aroC</name>
    <name type="ordered locus">BCc_061</name>
</gene>
<reference key="1">
    <citation type="journal article" date="2006" name="Science">
        <title>A small microbial genome: the end of a long symbiotic relationship?</title>
        <authorList>
            <person name="Perez-Brocal V."/>
            <person name="Gil R."/>
            <person name="Ramos S."/>
            <person name="Lamelas A."/>
            <person name="Postigo M."/>
            <person name="Michelena J.M."/>
            <person name="Silva F.J."/>
            <person name="Moya A."/>
            <person name="Latorre A."/>
        </authorList>
    </citation>
    <scope>NUCLEOTIDE SEQUENCE [LARGE SCALE GENOMIC DNA]</scope>
    <source>
        <strain>Cc</strain>
    </source>
</reference>